<name>SUCC_ACTP2</name>
<comment type="function">
    <text evidence="1">Succinyl-CoA synthetase functions in the citric acid cycle (TCA), coupling the hydrolysis of succinyl-CoA to the synthesis of either ATP or GTP and thus represents the only step of substrate-level phosphorylation in the TCA. The beta subunit provides nucleotide specificity of the enzyme and binds the substrate succinate, while the binding sites for coenzyme A and phosphate are found in the alpha subunit.</text>
</comment>
<comment type="catalytic activity">
    <reaction evidence="1">
        <text>succinate + ATP + CoA = succinyl-CoA + ADP + phosphate</text>
        <dbReference type="Rhea" id="RHEA:17661"/>
        <dbReference type="ChEBI" id="CHEBI:30031"/>
        <dbReference type="ChEBI" id="CHEBI:30616"/>
        <dbReference type="ChEBI" id="CHEBI:43474"/>
        <dbReference type="ChEBI" id="CHEBI:57287"/>
        <dbReference type="ChEBI" id="CHEBI:57292"/>
        <dbReference type="ChEBI" id="CHEBI:456216"/>
        <dbReference type="EC" id="6.2.1.5"/>
    </reaction>
    <physiologicalReaction direction="right-to-left" evidence="1">
        <dbReference type="Rhea" id="RHEA:17663"/>
    </physiologicalReaction>
</comment>
<comment type="catalytic activity">
    <reaction evidence="1">
        <text>GTP + succinate + CoA = succinyl-CoA + GDP + phosphate</text>
        <dbReference type="Rhea" id="RHEA:22120"/>
        <dbReference type="ChEBI" id="CHEBI:30031"/>
        <dbReference type="ChEBI" id="CHEBI:37565"/>
        <dbReference type="ChEBI" id="CHEBI:43474"/>
        <dbReference type="ChEBI" id="CHEBI:57287"/>
        <dbReference type="ChEBI" id="CHEBI:57292"/>
        <dbReference type="ChEBI" id="CHEBI:58189"/>
    </reaction>
    <physiologicalReaction direction="right-to-left" evidence="1">
        <dbReference type="Rhea" id="RHEA:22122"/>
    </physiologicalReaction>
</comment>
<comment type="cofactor">
    <cofactor evidence="1">
        <name>Mg(2+)</name>
        <dbReference type="ChEBI" id="CHEBI:18420"/>
    </cofactor>
    <text evidence="1">Binds 1 Mg(2+) ion per subunit.</text>
</comment>
<comment type="pathway">
    <text evidence="1">Carbohydrate metabolism; tricarboxylic acid cycle; succinate from succinyl-CoA (ligase route): step 1/1.</text>
</comment>
<comment type="subunit">
    <text evidence="1">Heterotetramer of two alpha and two beta subunits.</text>
</comment>
<comment type="similarity">
    <text evidence="1">Belongs to the succinate/malate CoA ligase beta subunit family.</text>
</comment>
<dbReference type="EC" id="6.2.1.5" evidence="1"/>
<dbReference type="EMBL" id="CP000569">
    <property type="protein sequence ID" value="ABN73556.1"/>
    <property type="molecule type" value="Genomic_DNA"/>
</dbReference>
<dbReference type="RefSeq" id="WP_005611684.1">
    <property type="nucleotide sequence ID" value="NC_009053.1"/>
</dbReference>
<dbReference type="SMR" id="A3MZH0"/>
<dbReference type="STRING" id="416269.APL_0452"/>
<dbReference type="EnsemblBacteria" id="ABN73556">
    <property type="protein sequence ID" value="ABN73556"/>
    <property type="gene ID" value="APL_0452"/>
</dbReference>
<dbReference type="KEGG" id="apl:APL_0452"/>
<dbReference type="eggNOG" id="COG0045">
    <property type="taxonomic scope" value="Bacteria"/>
</dbReference>
<dbReference type="HOGENOM" id="CLU_037430_0_2_6"/>
<dbReference type="UniPathway" id="UPA00223">
    <property type="reaction ID" value="UER00999"/>
</dbReference>
<dbReference type="Proteomes" id="UP000001432">
    <property type="component" value="Chromosome"/>
</dbReference>
<dbReference type="GO" id="GO:0005829">
    <property type="term" value="C:cytosol"/>
    <property type="evidence" value="ECO:0007669"/>
    <property type="project" value="TreeGrafter"/>
</dbReference>
<dbReference type="GO" id="GO:0042709">
    <property type="term" value="C:succinate-CoA ligase complex"/>
    <property type="evidence" value="ECO:0007669"/>
    <property type="project" value="TreeGrafter"/>
</dbReference>
<dbReference type="GO" id="GO:0005524">
    <property type="term" value="F:ATP binding"/>
    <property type="evidence" value="ECO:0007669"/>
    <property type="project" value="UniProtKB-UniRule"/>
</dbReference>
<dbReference type="GO" id="GO:0000287">
    <property type="term" value="F:magnesium ion binding"/>
    <property type="evidence" value="ECO:0007669"/>
    <property type="project" value="UniProtKB-UniRule"/>
</dbReference>
<dbReference type="GO" id="GO:0004775">
    <property type="term" value="F:succinate-CoA ligase (ADP-forming) activity"/>
    <property type="evidence" value="ECO:0007669"/>
    <property type="project" value="UniProtKB-UniRule"/>
</dbReference>
<dbReference type="GO" id="GO:0004776">
    <property type="term" value="F:succinate-CoA ligase (GDP-forming) activity"/>
    <property type="evidence" value="ECO:0007669"/>
    <property type="project" value="RHEA"/>
</dbReference>
<dbReference type="GO" id="GO:0006104">
    <property type="term" value="P:succinyl-CoA metabolic process"/>
    <property type="evidence" value="ECO:0007669"/>
    <property type="project" value="TreeGrafter"/>
</dbReference>
<dbReference type="GO" id="GO:0006099">
    <property type="term" value="P:tricarboxylic acid cycle"/>
    <property type="evidence" value="ECO:0007669"/>
    <property type="project" value="UniProtKB-UniRule"/>
</dbReference>
<dbReference type="FunFam" id="3.30.1490.20:FF:000002">
    <property type="entry name" value="Succinate--CoA ligase [ADP-forming] subunit beta"/>
    <property type="match status" value="1"/>
</dbReference>
<dbReference type="FunFam" id="3.30.470.20:FF:000002">
    <property type="entry name" value="Succinate--CoA ligase [ADP-forming] subunit beta"/>
    <property type="match status" value="1"/>
</dbReference>
<dbReference type="FunFam" id="3.40.50.261:FF:000001">
    <property type="entry name" value="Succinate--CoA ligase [ADP-forming] subunit beta"/>
    <property type="match status" value="1"/>
</dbReference>
<dbReference type="Gene3D" id="3.30.1490.20">
    <property type="entry name" value="ATP-grasp fold, A domain"/>
    <property type="match status" value="1"/>
</dbReference>
<dbReference type="Gene3D" id="3.30.470.20">
    <property type="entry name" value="ATP-grasp fold, B domain"/>
    <property type="match status" value="1"/>
</dbReference>
<dbReference type="Gene3D" id="3.40.50.261">
    <property type="entry name" value="Succinyl-CoA synthetase domains"/>
    <property type="match status" value="1"/>
</dbReference>
<dbReference type="HAMAP" id="MF_00558">
    <property type="entry name" value="Succ_CoA_beta"/>
    <property type="match status" value="1"/>
</dbReference>
<dbReference type="InterPro" id="IPR013650">
    <property type="entry name" value="ATP-grasp_succ-CoA_synth-type"/>
</dbReference>
<dbReference type="InterPro" id="IPR013815">
    <property type="entry name" value="ATP_grasp_subdomain_1"/>
</dbReference>
<dbReference type="InterPro" id="IPR017866">
    <property type="entry name" value="Succ-CoA_synthase_bsu_CS"/>
</dbReference>
<dbReference type="InterPro" id="IPR005811">
    <property type="entry name" value="SUCC_ACL_C"/>
</dbReference>
<dbReference type="InterPro" id="IPR005809">
    <property type="entry name" value="Succ_CoA_ligase-like_bsu"/>
</dbReference>
<dbReference type="InterPro" id="IPR016102">
    <property type="entry name" value="Succinyl-CoA_synth-like"/>
</dbReference>
<dbReference type="NCBIfam" id="NF001913">
    <property type="entry name" value="PRK00696.1"/>
    <property type="match status" value="1"/>
</dbReference>
<dbReference type="NCBIfam" id="TIGR01016">
    <property type="entry name" value="sucCoAbeta"/>
    <property type="match status" value="1"/>
</dbReference>
<dbReference type="PANTHER" id="PTHR11815:SF10">
    <property type="entry name" value="SUCCINATE--COA LIGASE [GDP-FORMING] SUBUNIT BETA, MITOCHONDRIAL"/>
    <property type="match status" value="1"/>
</dbReference>
<dbReference type="PANTHER" id="PTHR11815">
    <property type="entry name" value="SUCCINYL-COA SYNTHETASE BETA CHAIN"/>
    <property type="match status" value="1"/>
</dbReference>
<dbReference type="Pfam" id="PF08442">
    <property type="entry name" value="ATP-grasp_2"/>
    <property type="match status" value="1"/>
</dbReference>
<dbReference type="Pfam" id="PF00549">
    <property type="entry name" value="Ligase_CoA"/>
    <property type="match status" value="1"/>
</dbReference>
<dbReference type="PIRSF" id="PIRSF001554">
    <property type="entry name" value="SucCS_beta"/>
    <property type="match status" value="1"/>
</dbReference>
<dbReference type="SUPFAM" id="SSF56059">
    <property type="entry name" value="Glutathione synthetase ATP-binding domain-like"/>
    <property type="match status" value="1"/>
</dbReference>
<dbReference type="SUPFAM" id="SSF52210">
    <property type="entry name" value="Succinyl-CoA synthetase domains"/>
    <property type="match status" value="1"/>
</dbReference>
<dbReference type="PROSITE" id="PS01217">
    <property type="entry name" value="SUCCINYL_COA_LIG_3"/>
    <property type="match status" value="1"/>
</dbReference>
<proteinExistence type="inferred from homology"/>
<sequence length="388" mass="41832">MNLHEYQAKQIFAQYRLPVSKGIVCHSLDDAVSAIHTLAGDTWAAKCQVHAGGRGKAGGVKLVRSEAEIREFCNQWLGQRLVTFQTDKNGQPVNTIYLEETCLIERELYLGAVIDRSSQKIVFMASNAGGMNIEDVAAQTPELIHKATIDPLTGAQAFQGRELAFKLGLSGDQIKQFAHLFVQLAKLFIEKDLALLEVNPLVLTKQGQLLCLDAKMVIDSNALYRHPELKALQDPSQEDAREADAAKWDLNYVALDGNIGCMVNGAGLAMGTMDIVKLHGGRPANFLDVGGGATKERVSEAFKLILSDQNVKAVLVNIFGGIVRCDLIAEGIIAAVNEVGINIPVIVRLEGTNAELGREILANSGLRLIAANTLTQAAQLAVKAAEGK</sequence>
<gene>
    <name evidence="1" type="primary">sucC</name>
    <name type="ordered locus">APL_0452</name>
</gene>
<feature type="chain" id="PRO_1000081990" description="Succinate--CoA ligase [ADP-forming] subunit beta">
    <location>
        <begin position="1"/>
        <end position="388"/>
    </location>
</feature>
<feature type="binding site" evidence="1">
    <location>
        <position position="46"/>
    </location>
    <ligand>
        <name>ATP</name>
        <dbReference type="ChEBI" id="CHEBI:30616"/>
    </ligand>
</feature>
<feature type="binding site" evidence="1">
    <location>
        <begin position="53"/>
        <end position="55"/>
    </location>
    <ligand>
        <name>ATP</name>
        <dbReference type="ChEBI" id="CHEBI:30616"/>
    </ligand>
</feature>
<feature type="binding site" evidence="1">
    <location>
        <position position="99"/>
    </location>
    <ligand>
        <name>ATP</name>
        <dbReference type="ChEBI" id="CHEBI:30616"/>
    </ligand>
</feature>
<feature type="binding site" evidence="1">
    <location>
        <position position="102"/>
    </location>
    <ligand>
        <name>ATP</name>
        <dbReference type="ChEBI" id="CHEBI:30616"/>
    </ligand>
</feature>
<feature type="binding site" evidence="1">
    <location>
        <position position="107"/>
    </location>
    <ligand>
        <name>ATP</name>
        <dbReference type="ChEBI" id="CHEBI:30616"/>
    </ligand>
</feature>
<feature type="binding site" evidence="1">
    <location>
        <position position="199"/>
    </location>
    <ligand>
        <name>Mg(2+)</name>
        <dbReference type="ChEBI" id="CHEBI:18420"/>
    </ligand>
</feature>
<feature type="binding site" evidence="1">
    <location>
        <position position="213"/>
    </location>
    <ligand>
        <name>Mg(2+)</name>
        <dbReference type="ChEBI" id="CHEBI:18420"/>
    </ligand>
</feature>
<feature type="binding site" evidence="1">
    <location>
        <position position="264"/>
    </location>
    <ligand>
        <name>substrate</name>
        <note>ligand shared with subunit alpha</note>
    </ligand>
</feature>
<feature type="binding site" evidence="1">
    <location>
        <begin position="321"/>
        <end position="323"/>
    </location>
    <ligand>
        <name>substrate</name>
        <note>ligand shared with subunit alpha</note>
    </ligand>
</feature>
<organism>
    <name type="scientific">Actinobacillus pleuropneumoniae serotype 5b (strain L20)</name>
    <dbReference type="NCBI Taxonomy" id="416269"/>
    <lineage>
        <taxon>Bacteria</taxon>
        <taxon>Pseudomonadati</taxon>
        <taxon>Pseudomonadota</taxon>
        <taxon>Gammaproteobacteria</taxon>
        <taxon>Pasteurellales</taxon>
        <taxon>Pasteurellaceae</taxon>
        <taxon>Actinobacillus</taxon>
    </lineage>
</organism>
<protein>
    <recommendedName>
        <fullName evidence="1">Succinate--CoA ligase [ADP-forming] subunit beta</fullName>
        <ecNumber evidence="1">6.2.1.5</ecNumber>
    </recommendedName>
    <alternativeName>
        <fullName evidence="1">Succinyl-CoA synthetase subunit beta</fullName>
        <shortName evidence="1">SCS-beta</shortName>
    </alternativeName>
</protein>
<evidence type="ECO:0000255" key="1">
    <source>
        <dbReference type="HAMAP-Rule" id="MF_00558"/>
    </source>
</evidence>
<accession>A3MZH0</accession>
<keyword id="KW-0067">ATP-binding</keyword>
<keyword id="KW-0436">Ligase</keyword>
<keyword id="KW-0460">Magnesium</keyword>
<keyword id="KW-0479">Metal-binding</keyword>
<keyword id="KW-0547">Nucleotide-binding</keyword>
<keyword id="KW-1185">Reference proteome</keyword>
<keyword id="KW-0816">Tricarboxylic acid cycle</keyword>
<reference key="1">
    <citation type="journal article" date="2008" name="J. Bacteriol.">
        <title>The complete genome sequence of Actinobacillus pleuropneumoniae L20 (serotype 5b).</title>
        <authorList>
            <person name="Foote S.J."/>
            <person name="Bosse J.T."/>
            <person name="Bouevitch A.B."/>
            <person name="Langford P.R."/>
            <person name="Young N.M."/>
            <person name="Nash J.H.E."/>
        </authorList>
    </citation>
    <scope>NUCLEOTIDE SEQUENCE [LARGE SCALE GENOMIC DNA]</scope>
    <source>
        <strain>L20</strain>
    </source>
</reference>